<sequence>MLKRKKLLQGFLKFLPLIIPATIFVSCARRESNHLIFNISLDHDADASISKFFELYSNNLSKKLDKKVTVSFNIIDDSFTKISNIQTAKADFAFVNSQSIKDNGIEEFNLILQTQTDAFKEDTNLDYYSDGQLKSKAEKMTTLFSKTPYKDWEDTAQQWTGSRYNFLYETNKLINFYRGMILITGSEEEIKKIKEAWDQKKWSDFMNYGIGHGSSGSAGKFQLPDLLLRKHFGSSYPGLQNAINQNPDKFANVRGREIGRDNKIKIVFDDANSFAWTHNDKNATNHFYTPTENNGKGDSEKSNNKNNKVEILTYTDPMLYDIGIVSDTLSDRYQKAIAEVFVELAKTKQDIYGPSYGYNGYNLITDPNKEILDVIHKTYG</sequence>
<feature type="signal peptide" evidence="1">
    <location>
        <begin position="1"/>
        <end position="26"/>
    </location>
</feature>
<feature type="chain" id="PRO_0000018096" description="High affinity transport system protein p37">
    <location>
        <begin position="27"/>
        <end position="380"/>
    </location>
</feature>
<feature type="region of interest" description="Disordered" evidence="2">
    <location>
        <begin position="285"/>
        <end position="304"/>
    </location>
</feature>
<feature type="lipid moiety-binding region" description="N-palmitoyl cysteine" evidence="3">
    <location>
        <position position="27"/>
    </location>
</feature>
<feature type="lipid moiety-binding region" description="S-diacylglycerol cysteine" evidence="3">
    <location>
        <position position="27"/>
    </location>
</feature>
<organism>
    <name type="scientific">Mycoplasma pneumoniae (strain ATCC 29342 / M129 / Subtype 1)</name>
    <name type="common">Mycoplasmoides pneumoniae</name>
    <dbReference type="NCBI Taxonomy" id="272634"/>
    <lineage>
        <taxon>Bacteria</taxon>
        <taxon>Bacillati</taxon>
        <taxon>Mycoplasmatota</taxon>
        <taxon>Mycoplasmoidales</taxon>
        <taxon>Mycoplasmoidaceae</taxon>
        <taxon>Mycoplasmoides</taxon>
    </lineage>
</organism>
<comment type="function">
    <text>P37 is part of a high-affinity transport system.</text>
</comment>
<comment type="subcellular location">
    <subcellularLocation>
        <location>Cell membrane</location>
        <topology>Lipid-anchor</topology>
    </subcellularLocation>
</comment>
<evidence type="ECO:0000255" key="1">
    <source>
        <dbReference type="PROSITE-ProRule" id="PRU00303"/>
    </source>
</evidence>
<evidence type="ECO:0000256" key="2">
    <source>
        <dbReference type="SAM" id="MobiDB-lite"/>
    </source>
</evidence>
<evidence type="ECO:0000305" key="3"/>
<accession>P75371</accession>
<dbReference type="EMBL" id="U00089">
    <property type="protein sequence ID" value="AAB96073.1"/>
    <property type="molecule type" value="Genomic_DNA"/>
</dbReference>
<dbReference type="PIR" id="S73751">
    <property type="entry name" value="S73751"/>
</dbReference>
<dbReference type="RefSeq" id="NP_110103.1">
    <property type="nucleotide sequence ID" value="NC_000912.1"/>
</dbReference>
<dbReference type="RefSeq" id="WP_010874771.1">
    <property type="nucleotide sequence ID" value="NZ_OU342337.1"/>
</dbReference>
<dbReference type="SMR" id="P75371"/>
<dbReference type="IntAct" id="P75371">
    <property type="interactions" value="1"/>
</dbReference>
<dbReference type="STRING" id="272634.MPN_415"/>
<dbReference type="EnsemblBacteria" id="AAB96073">
    <property type="protein sequence ID" value="AAB96073"/>
    <property type="gene ID" value="MPN_415"/>
</dbReference>
<dbReference type="KEGG" id="mpn:MPN_415"/>
<dbReference type="PATRIC" id="fig|272634.6.peg.450"/>
<dbReference type="HOGENOM" id="CLU_055613_0_0_14"/>
<dbReference type="OrthoDB" id="401239at2"/>
<dbReference type="BioCyc" id="MPNE272634:G1GJ3-672-MONOMER"/>
<dbReference type="Proteomes" id="UP000000808">
    <property type="component" value="Chromosome"/>
</dbReference>
<dbReference type="GO" id="GO:0005886">
    <property type="term" value="C:plasma membrane"/>
    <property type="evidence" value="ECO:0007669"/>
    <property type="project" value="UniProtKB-SubCell"/>
</dbReference>
<dbReference type="Gene3D" id="3.40.190.190">
    <property type="entry name" value="CypI, domain 2"/>
    <property type="match status" value="1"/>
</dbReference>
<dbReference type="Gene3D" id="3.40.190.180">
    <property type="entry name" value="Cypl, domain I"/>
    <property type="match status" value="1"/>
</dbReference>
<dbReference type="InterPro" id="IPR010592">
    <property type="entry name" value="CypI"/>
</dbReference>
<dbReference type="InterPro" id="IPR043099">
    <property type="entry name" value="CypI_dom_I"/>
</dbReference>
<dbReference type="InterPro" id="IPR043100">
    <property type="entry name" value="CypI_dom_II"/>
</dbReference>
<dbReference type="NCBIfam" id="NF045838">
    <property type="entry name" value="MG289_thiam_LP"/>
    <property type="match status" value="1"/>
</dbReference>
<dbReference type="Pfam" id="PF06646">
    <property type="entry name" value="CypI"/>
    <property type="match status" value="1"/>
</dbReference>
<dbReference type="PIRSF" id="PIRSF004523">
    <property type="entry name" value="Mycoplasma_p37"/>
    <property type="match status" value="1"/>
</dbReference>
<dbReference type="PROSITE" id="PS51257">
    <property type="entry name" value="PROKAR_LIPOPROTEIN"/>
    <property type="match status" value="1"/>
</dbReference>
<protein>
    <recommendedName>
        <fullName>High affinity transport system protein p37</fullName>
    </recommendedName>
</protein>
<reference key="1">
    <citation type="journal article" date="1996" name="Nucleic Acids Res.">
        <title>Complete sequence analysis of the genome of the bacterium Mycoplasma pneumoniae.</title>
        <authorList>
            <person name="Himmelreich R."/>
            <person name="Hilbert H."/>
            <person name="Plagens H."/>
            <person name="Pirkl E."/>
            <person name="Li B.-C."/>
            <person name="Herrmann R."/>
        </authorList>
    </citation>
    <scope>NUCLEOTIDE SEQUENCE [LARGE SCALE GENOMIC DNA]</scope>
    <source>
        <strain>ATCC 29342 / M129 / Subtype 1</strain>
    </source>
</reference>
<gene>
    <name type="primary">p37</name>
    <name type="ordered locus">MPN_415</name>
    <name type="ORF">MP425</name>
</gene>
<keyword id="KW-1003">Cell membrane</keyword>
<keyword id="KW-0449">Lipoprotein</keyword>
<keyword id="KW-0472">Membrane</keyword>
<keyword id="KW-0564">Palmitate</keyword>
<keyword id="KW-1185">Reference proteome</keyword>
<keyword id="KW-0732">Signal</keyword>
<keyword id="KW-0813">Transport</keyword>
<proteinExistence type="inferred from homology"/>
<name>P37_MYCPN</name>